<evidence type="ECO:0000255" key="1">
    <source>
        <dbReference type="HAMAP-Rule" id="MF_01847"/>
    </source>
</evidence>
<comment type="function">
    <text evidence="1">Catalyzes the hydrolysis of 4-amino-2-methyl-5-hydroxymethylpyrimidine pyrophosphate (HMP-PP) to 4-amino-2-methyl-5-hydroxymethylpyrimidine phosphate (HMP-P).</text>
</comment>
<comment type="catalytic activity">
    <reaction evidence="1">
        <text>4-amino-2-methyl-5-(diphosphooxymethyl)pyrimidine + H2O = 4-amino-2-methyl-5-(phosphooxymethyl)pyrimidine + phosphate + H(+)</text>
        <dbReference type="Rhea" id="RHEA:27914"/>
        <dbReference type="ChEBI" id="CHEBI:15377"/>
        <dbReference type="ChEBI" id="CHEBI:15378"/>
        <dbReference type="ChEBI" id="CHEBI:43474"/>
        <dbReference type="ChEBI" id="CHEBI:57841"/>
        <dbReference type="ChEBI" id="CHEBI:58354"/>
    </reaction>
</comment>
<comment type="cofactor">
    <cofactor evidence="1">
        <name>Mg(2+)</name>
        <dbReference type="ChEBI" id="CHEBI:18420"/>
    </cofactor>
</comment>
<comment type="similarity">
    <text evidence="1">Belongs to the HAD-like hydrolase superfamily. Cof family.</text>
</comment>
<dbReference type="EC" id="3.6.1.-" evidence="1"/>
<dbReference type="EMBL" id="CP000036">
    <property type="protein sequence ID" value="ABB65053.1"/>
    <property type="molecule type" value="Genomic_DNA"/>
</dbReference>
<dbReference type="RefSeq" id="WP_000113026.1">
    <property type="nucleotide sequence ID" value="NC_007613.1"/>
</dbReference>
<dbReference type="SMR" id="Q325F5"/>
<dbReference type="KEGG" id="sbo:SBO_0340"/>
<dbReference type="HOGENOM" id="CLU_044146_5_2_6"/>
<dbReference type="Proteomes" id="UP000007067">
    <property type="component" value="Chromosome"/>
</dbReference>
<dbReference type="GO" id="GO:0002145">
    <property type="term" value="F:4-amino-5-hydroxymethyl-2-methylpyrimidine diphosphatase activity"/>
    <property type="evidence" value="ECO:0007669"/>
    <property type="project" value="RHEA"/>
</dbReference>
<dbReference type="GO" id="GO:0000287">
    <property type="term" value="F:magnesium ion binding"/>
    <property type="evidence" value="ECO:0000250"/>
    <property type="project" value="UniProtKB"/>
</dbReference>
<dbReference type="GO" id="GO:0016791">
    <property type="term" value="F:phosphatase activity"/>
    <property type="evidence" value="ECO:0000250"/>
    <property type="project" value="UniProtKB"/>
</dbReference>
<dbReference type="CDD" id="cd07516">
    <property type="entry name" value="HAD_Pase"/>
    <property type="match status" value="1"/>
</dbReference>
<dbReference type="FunFam" id="3.30.1240.10:FF:000002">
    <property type="entry name" value="HMP-PP phosphatase"/>
    <property type="match status" value="1"/>
</dbReference>
<dbReference type="Gene3D" id="3.30.1240.10">
    <property type="match status" value="1"/>
</dbReference>
<dbReference type="Gene3D" id="3.40.50.1000">
    <property type="entry name" value="HAD superfamily/HAD-like"/>
    <property type="match status" value="1"/>
</dbReference>
<dbReference type="HAMAP" id="MF_01847">
    <property type="entry name" value="HMP_PP_phosphat"/>
    <property type="match status" value="1"/>
</dbReference>
<dbReference type="InterPro" id="IPR000150">
    <property type="entry name" value="Cof"/>
</dbReference>
<dbReference type="InterPro" id="IPR036412">
    <property type="entry name" value="HAD-like_sf"/>
</dbReference>
<dbReference type="InterPro" id="IPR006379">
    <property type="entry name" value="HAD-SF_hydro_IIB"/>
</dbReference>
<dbReference type="InterPro" id="IPR023214">
    <property type="entry name" value="HAD_sf"/>
</dbReference>
<dbReference type="InterPro" id="IPR023938">
    <property type="entry name" value="HMP-PP_phosphatase"/>
</dbReference>
<dbReference type="NCBIfam" id="TIGR00099">
    <property type="entry name" value="Cof-subfamily"/>
    <property type="match status" value="1"/>
</dbReference>
<dbReference type="NCBIfam" id="TIGR01484">
    <property type="entry name" value="HAD-SF-IIB"/>
    <property type="match status" value="1"/>
</dbReference>
<dbReference type="NCBIfam" id="NF011705">
    <property type="entry name" value="PRK15126.1"/>
    <property type="match status" value="1"/>
</dbReference>
<dbReference type="PANTHER" id="PTHR47267">
    <property type="match status" value="1"/>
</dbReference>
<dbReference type="PANTHER" id="PTHR47267:SF2">
    <property type="entry name" value="HMP-PP PHOSPHATASE"/>
    <property type="match status" value="1"/>
</dbReference>
<dbReference type="Pfam" id="PF08282">
    <property type="entry name" value="Hydrolase_3"/>
    <property type="match status" value="1"/>
</dbReference>
<dbReference type="SFLD" id="SFLDG01140">
    <property type="entry name" value="C2.B:_Phosphomannomutase_and_P"/>
    <property type="match status" value="1"/>
</dbReference>
<dbReference type="SFLD" id="SFLDS00003">
    <property type="entry name" value="Haloacid_Dehalogenase"/>
    <property type="match status" value="1"/>
</dbReference>
<dbReference type="SUPFAM" id="SSF56784">
    <property type="entry name" value="HAD-like"/>
    <property type="match status" value="1"/>
</dbReference>
<dbReference type="PROSITE" id="PS01228">
    <property type="entry name" value="COF_1"/>
    <property type="match status" value="1"/>
</dbReference>
<dbReference type="PROSITE" id="PS01229">
    <property type="entry name" value="COF_2"/>
    <property type="match status" value="1"/>
</dbReference>
<sequence length="260" mass="28830">MARLAAFDMDGTLLMPDHHLGEKTLSTLARLRERDITLTFATGRHALEMQHILGALSLDAYLITGNGTRVHSLEGELLHRDDLPADVAELVLYQQWDTRASMHIFNDDGWFTGKEIPALLQAFVYSGFRYQIIDVKKMPLGSVTKICFCGDHDDLTRLQIQLYEALGERAHLCFSATDCLEVLPVGCNKGAALTVLTQHLGLSLRDCMAFGDAMNDREMLGSVGSGFIMGNAMPQLRAELPHLPVIGHCRNQAVSHYLTH</sequence>
<name>COF_SHIBS</name>
<gene>
    <name evidence="1" type="primary">cof</name>
    <name type="ordered locus">SBO_0340</name>
</gene>
<protein>
    <recommendedName>
        <fullName evidence="1">HMP-PP phosphatase</fullName>
        <ecNumber evidence="1">3.6.1.-</ecNumber>
    </recommendedName>
</protein>
<proteinExistence type="inferred from homology"/>
<accession>Q325F5</accession>
<keyword id="KW-0378">Hydrolase</keyword>
<keyword id="KW-0460">Magnesium</keyword>
<keyword id="KW-0479">Metal-binding</keyword>
<organism>
    <name type="scientific">Shigella boydii serotype 4 (strain Sb227)</name>
    <dbReference type="NCBI Taxonomy" id="300268"/>
    <lineage>
        <taxon>Bacteria</taxon>
        <taxon>Pseudomonadati</taxon>
        <taxon>Pseudomonadota</taxon>
        <taxon>Gammaproteobacteria</taxon>
        <taxon>Enterobacterales</taxon>
        <taxon>Enterobacteriaceae</taxon>
        <taxon>Shigella</taxon>
    </lineage>
</organism>
<reference key="1">
    <citation type="journal article" date="2005" name="Nucleic Acids Res.">
        <title>Genome dynamics and diversity of Shigella species, the etiologic agents of bacillary dysentery.</title>
        <authorList>
            <person name="Yang F."/>
            <person name="Yang J."/>
            <person name="Zhang X."/>
            <person name="Chen L."/>
            <person name="Jiang Y."/>
            <person name="Yan Y."/>
            <person name="Tang X."/>
            <person name="Wang J."/>
            <person name="Xiong Z."/>
            <person name="Dong J."/>
            <person name="Xue Y."/>
            <person name="Zhu Y."/>
            <person name="Xu X."/>
            <person name="Sun L."/>
            <person name="Chen S."/>
            <person name="Nie H."/>
            <person name="Peng J."/>
            <person name="Xu J."/>
            <person name="Wang Y."/>
            <person name="Yuan Z."/>
            <person name="Wen Y."/>
            <person name="Yao Z."/>
            <person name="Shen Y."/>
            <person name="Qiang B."/>
            <person name="Hou Y."/>
            <person name="Yu J."/>
            <person name="Jin Q."/>
        </authorList>
    </citation>
    <scope>NUCLEOTIDE SEQUENCE [LARGE SCALE GENOMIC DNA]</scope>
    <source>
        <strain>Sb227</strain>
    </source>
</reference>
<feature type="chain" id="PRO_0000342995" description="HMP-PP phosphatase">
    <location>
        <begin position="1"/>
        <end position="260"/>
    </location>
</feature>
<feature type="active site" description="Nucleophile" evidence="1">
    <location>
        <position position="8"/>
    </location>
</feature>
<feature type="binding site" evidence="1">
    <location>
        <position position="8"/>
    </location>
    <ligand>
        <name>Mg(2+)</name>
        <dbReference type="ChEBI" id="CHEBI:18420"/>
    </ligand>
</feature>
<feature type="binding site" evidence="1">
    <location>
        <position position="10"/>
    </location>
    <ligand>
        <name>Mg(2+)</name>
        <dbReference type="ChEBI" id="CHEBI:18420"/>
    </ligand>
</feature>
<feature type="binding site" evidence="1">
    <location>
        <position position="212"/>
    </location>
    <ligand>
        <name>Mg(2+)</name>
        <dbReference type="ChEBI" id="CHEBI:18420"/>
    </ligand>
</feature>